<sequence length="132" mass="14829">MDTMNWLDQVKWDAQGLVPVIAQEAATGDVLMFAWMNREALAKTAELGRAVYYSRSRGKLWFKGEESGHVQQVHDIRLDCDSDVVLLKVTQLGHEPGIACHTGRHSCFFNALQNGAWQAVDPVLKDPESIYK</sequence>
<protein>
    <recommendedName>
        <fullName evidence="1">Phosphoribosyl-AMP cyclohydrolase</fullName>
        <shortName evidence="1">PRA-CH</shortName>
        <ecNumber evidence="1">3.5.4.19</ecNumber>
    </recommendedName>
</protein>
<gene>
    <name evidence="1" type="primary">hisI</name>
    <name type="ordered locus">Ajs_0776</name>
</gene>
<proteinExistence type="inferred from homology"/>
<keyword id="KW-0028">Amino-acid biosynthesis</keyword>
<keyword id="KW-0963">Cytoplasm</keyword>
<keyword id="KW-0368">Histidine biosynthesis</keyword>
<keyword id="KW-0378">Hydrolase</keyword>
<keyword id="KW-0460">Magnesium</keyword>
<keyword id="KW-0479">Metal-binding</keyword>
<keyword id="KW-0862">Zinc</keyword>
<organism>
    <name type="scientific">Acidovorax sp. (strain JS42)</name>
    <dbReference type="NCBI Taxonomy" id="232721"/>
    <lineage>
        <taxon>Bacteria</taxon>
        <taxon>Pseudomonadati</taxon>
        <taxon>Pseudomonadota</taxon>
        <taxon>Betaproteobacteria</taxon>
        <taxon>Burkholderiales</taxon>
        <taxon>Comamonadaceae</taxon>
        <taxon>Acidovorax</taxon>
    </lineage>
</organism>
<dbReference type="EC" id="3.5.4.19" evidence="1"/>
<dbReference type="EMBL" id="CP000539">
    <property type="protein sequence ID" value="ABM41020.1"/>
    <property type="molecule type" value="Genomic_DNA"/>
</dbReference>
<dbReference type="SMR" id="A1W445"/>
<dbReference type="STRING" id="232721.Ajs_0776"/>
<dbReference type="KEGG" id="ajs:Ajs_0776"/>
<dbReference type="eggNOG" id="COG0139">
    <property type="taxonomic scope" value="Bacteria"/>
</dbReference>
<dbReference type="HOGENOM" id="CLU_048577_5_0_4"/>
<dbReference type="UniPathway" id="UPA00031">
    <property type="reaction ID" value="UER00008"/>
</dbReference>
<dbReference type="Proteomes" id="UP000000645">
    <property type="component" value="Chromosome"/>
</dbReference>
<dbReference type="GO" id="GO:0005737">
    <property type="term" value="C:cytoplasm"/>
    <property type="evidence" value="ECO:0007669"/>
    <property type="project" value="UniProtKB-SubCell"/>
</dbReference>
<dbReference type="GO" id="GO:0000287">
    <property type="term" value="F:magnesium ion binding"/>
    <property type="evidence" value="ECO:0007669"/>
    <property type="project" value="UniProtKB-UniRule"/>
</dbReference>
<dbReference type="GO" id="GO:0004635">
    <property type="term" value="F:phosphoribosyl-AMP cyclohydrolase activity"/>
    <property type="evidence" value="ECO:0007669"/>
    <property type="project" value="UniProtKB-UniRule"/>
</dbReference>
<dbReference type="GO" id="GO:0008270">
    <property type="term" value="F:zinc ion binding"/>
    <property type="evidence" value="ECO:0007669"/>
    <property type="project" value="UniProtKB-UniRule"/>
</dbReference>
<dbReference type="GO" id="GO:0000105">
    <property type="term" value="P:L-histidine biosynthetic process"/>
    <property type="evidence" value="ECO:0007669"/>
    <property type="project" value="UniProtKB-UniRule"/>
</dbReference>
<dbReference type="FunFam" id="3.10.20.810:FF:000001">
    <property type="entry name" value="Histidine biosynthesis bifunctional protein HisIE"/>
    <property type="match status" value="1"/>
</dbReference>
<dbReference type="Gene3D" id="3.10.20.810">
    <property type="entry name" value="Phosphoribosyl-AMP cyclohydrolase"/>
    <property type="match status" value="1"/>
</dbReference>
<dbReference type="HAMAP" id="MF_01021">
    <property type="entry name" value="HisI"/>
    <property type="match status" value="1"/>
</dbReference>
<dbReference type="InterPro" id="IPR026660">
    <property type="entry name" value="PRA-CH"/>
</dbReference>
<dbReference type="InterPro" id="IPR002496">
    <property type="entry name" value="PRib_AMP_CycHydrolase_dom"/>
</dbReference>
<dbReference type="InterPro" id="IPR038019">
    <property type="entry name" value="PRib_AMP_CycHydrolase_sf"/>
</dbReference>
<dbReference type="NCBIfam" id="NF000768">
    <property type="entry name" value="PRK00051.1"/>
    <property type="match status" value="1"/>
</dbReference>
<dbReference type="PANTHER" id="PTHR42945">
    <property type="entry name" value="HISTIDINE BIOSYNTHESIS BIFUNCTIONAL PROTEIN"/>
    <property type="match status" value="1"/>
</dbReference>
<dbReference type="PANTHER" id="PTHR42945:SF1">
    <property type="entry name" value="HISTIDINE BIOSYNTHESIS BIFUNCTIONAL PROTEIN HIS7"/>
    <property type="match status" value="1"/>
</dbReference>
<dbReference type="Pfam" id="PF01502">
    <property type="entry name" value="PRA-CH"/>
    <property type="match status" value="1"/>
</dbReference>
<dbReference type="SUPFAM" id="SSF141734">
    <property type="entry name" value="HisI-like"/>
    <property type="match status" value="1"/>
</dbReference>
<feature type="chain" id="PRO_0000319679" description="Phosphoribosyl-AMP cyclohydrolase">
    <location>
        <begin position="1"/>
        <end position="132"/>
    </location>
</feature>
<feature type="binding site" evidence="1">
    <location>
        <position position="79"/>
    </location>
    <ligand>
        <name>Mg(2+)</name>
        <dbReference type="ChEBI" id="CHEBI:18420"/>
    </ligand>
</feature>
<feature type="binding site" evidence="1">
    <location>
        <position position="80"/>
    </location>
    <ligand>
        <name>Zn(2+)</name>
        <dbReference type="ChEBI" id="CHEBI:29105"/>
        <note>ligand shared between dimeric partners</note>
    </ligand>
</feature>
<feature type="binding site" evidence="1">
    <location>
        <position position="81"/>
    </location>
    <ligand>
        <name>Mg(2+)</name>
        <dbReference type="ChEBI" id="CHEBI:18420"/>
    </ligand>
</feature>
<feature type="binding site" evidence="1">
    <location>
        <position position="83"/>
    </location>
    <ligand>
        <name>Mg(2+)</name>
        <dbReference type="ChEBI" id="CHEBI:18420"/>
    </ligand>
</feature>
<feature type="binding site" evidence="1">
    <location>
        <position position="100"/>
    </location>
    <ligand>
        <name>Zn(2+)</name>
        <dbReference type="ChEBI" id="CHEBI:29105"/>
        <note>ligand shared between dimeric partners</note>
    </ligand>
</feature>
<feature type="binding site" evidence="1">
    <location>
        <position position="107"/>
    </location>
    <ligand>
        <name>Zn(2+)</name>
        <dbReference type="ChEBI" id="CHEBI:29105"/>
        <note>ligand shared between dimeric partners</note>
    </ligand>
</feature>
<evidence type="ECO:0000255" key="1">
    <source>
        <dbReference type="HAMAP-Rule" id="MF_01021"/>
    </source>
</evidence>
<comment type="function">
    <text evidence="1">Catalyzes the hydrolysis of the adenine ring of phosphoribosyl-AMP.</text>
</comment>
<comment type="catalytic activity">
    <reaction evidence="1">
        <text>1-(5-phospho-beta-D-ribosyl)-5'-AMP + H2O = 1-(5-phospho-beta-D-ribosyl)-5-[(5-phospho-beta-D-ribosylamino)methylideneamino]imidazole-4-carboxamide</text>
        <dbReference type="Rhea" id="RHEA:20049"/>
        <dbReference type="ChEBI" id="CHEBI:15377"/>
        <dbReference type="ChEBI" id="CHEBI:58435"/>
        <dbReference type="ChEBI" id="CHEBI:59457"/>
        <dbReference type="EC" id="3.5.4.19"/>
    </reaction>
</comment>
<comment type="cofactor">
    <cofactor evidence="1">
        <name>Mg(2+)</name>
        <dbReference type="ChEBI" id="CHEBI:18420"/>
    </cofactor>
    <text evidence="1">Binds 1 Mg(2+) ion per subunit.</text>
</comment>
<comment type="cofactor">
    <cofactor evidence="1">
        <name>Zn(2+)</name>
        <dbReference type="ChEBI" id="CHEBI:29105"/>
    </cofactor>
    <text evidence="1">Binds 1 zinc ion per subunit.</text>
</comment>
<comment type="pathway">
    <text evidence="1">Amino-acid biosynthesis; L-histidine biosynthesis; L-histidine from 5-phospho-alpha-D-ribose 1-diphosphate: step 3/9.</text>
</comment>
<comment type="subunit">
    <text evidence="1">Homodimer.</text>
</comment>
<comment type="subcellular location">
    <subcellularLocation>
        <location evidence="1">Cytoplasm</location>
    </subcellularLocation>
</comment>
<comment type="similarity">
    <text evidence="1">Belongs to the PRA-CH family.</text>
</comment>
<reference key="1">
    <citation type="submission" date="2006-12" db="EMBL/GenBank/DDBJ databases">
        <title>Complete sequence of chromosome 1 of Acidovorax sp. JS42.</title>
        <authorList>
            <person name="Copeland A."/>
            <person name="Lucas S."/>
            <person name="Lapidus A."/>
            <person name="Barry K."/>
            <person name="Detter J.C."/>
            <person name="Glavina del Rio T."/>
            <person name="Dalin E."/>
            <person name="Tice H."/>
            <person name="Pitluck S."/>
            <person name="Chertkov O."/>
            <person name="Brettin T."/>
            <person name="Bruce D."/>
            <person name="Han C."/>
            <person name="Tapia R."/>
            <person name="Gilna P."/>
            <person name="Schmutz J."/>
            <person name="Larimer F."/>
            <person name="Land M."/>
            <person name="Hauser L."/>
            <person name="Kyrpides N."/>
            <person name="Kim E."/>
            <person name="Stahl D."/>
            <person name="Richardson P."/>
        </authorList>
    </citation>
    <scope>NUCLEOTIDE SEQUENCE [LARGE SCALE GENOMIC DNA]</scope>
    <source>
        <strain>JS42</strain>
    </source>
</reference>
<name>HIS3_ACISJ</name>
<accession>A1W445</accession>